<organism>
    <name type="scientific">Helicobacter pylori (strain J99 / ATCC 700824)</name>
    <name type="common">Campylobacter pylori J99</name>
    <dbReference type="NCBI Taxonomy" id="85963"/>
    <lineage>
        <taxon>Bacteria</taxon>
        <taxon>Pseudomonadati</taxon>
        <taxon>Campylobacterota</taxon>
        <taxon>Epsilonproteobacteria</taxon>
        <taxon>Campylobacterales</taxon>
        <taxon>Helicobacteraceae</taxon>
        <taxon>Helicobacter</taxon>
    </lineage>
</organism>
<comment type="similarity">
    <text evidence="1">Belongs to the UPF0763 family.</text>
</comment>
<dbReference type="EMBL" id="AE001439">
    <property type="protein sequence ID" value="AAD06177.1"/>
    <property type="molecule type" value="Genomic_DNA"/>
</dbReference>
<dbReference type="RefSeq" id="WP_000413462.1">
    <property type="nucleotide sequence ID" value="NZ_CP011330.1"/>
</dbReference>
<dbReference type="KEGG" id="hpj:jhp_0609"/>
<dbReference type="PATRIC" id="fig|85963.30.peg.376"/>
<dbReference type="eggNOG" id="ENOG5030YCA">
    <property type="taxonomic scope" value="Bacteria"/>
</dbReference>
<dbReference type="Proteomes" id="UP000000804">
    <property type="component" value="Chromosome"/>
</dbReference>
<dbReference type="HAMAP" id="MF_02110">
    <property type="entry name" value="UPF0763"/>
    <property type="match status" value="1"/>
</dbReference>
<dbReference type="InterPro" id="IPR019724">
    <property type="entry name" value="UPF0763"/>
</dbReference>
<dbReference type="Pfam" id="PF10788">
    <property type="entry name" value="DUF2603"/>
    <property type="match status" value="1"/>
</dbReference>
<feature type="chain" id="PRO_0000128695" description="UPF0763 protein jhp_0609">
    <location>
        <begin position="1"/>
        <end position="171"/>
    </location>
</feature>
<accession>P64664</accession>
<accession>O25375</accession>
<proteinExistence type="inferred from homology"/>
<gene>
    <name type="ordered locus">jhp_0609</name>
</gene>
<reference key="1">
    <citation type="journal article" date="1999" name="Nature">
        <title>Genomic sequence comparison of two unrelated isolates of the human gastric pathogen Helicobacter pylori.</title>
        <authorList>
            <person name="Alm R.A."/>
            <person name="Ling L.-S.L."/>
            <person name="Moir D.T."/>
            <person name="King B.L."/>
            <person name="Brown E.D."/>
            <person name="Doig P.C."/>
            <person name="Smith D.R."/>
            <person name="Noonan B."/>
            <person name="Guild B.C."/>
            <person name="deJonge B.L."/>
            <person name="Carmel G."/>
            <person name="Tummino P.J."/>
            <person name="Caruso A."/>
            <person name="Uria-Nickelsen M."/>
            <person name="Mills D.M."/>
            <person name="Ives C."/>
            <person name="Gibson R."/>
            <person name="Merberg D."/>
            <person name="Mills S.D."/>
            <person name="Jiang Q."/>
            <person name="Taylor D.E."/>
            <person name="Vovis G.F."/>
            <person name="Trust T.J."/>
        </authorList>
    </citation>
    <scope>NUCLEOTIDE SEQUENCE [LARGE SCALE GENOMIC DNA]</scope>
    <source>
        <strain>J99 / ATCC 700824</strain>
    </source>
</reference>
<protein>
    <recommendedName>
        <fullName evidence="1">UPF0763 protein jhp_0609</fullName>
    </recommendedName>
</protein>
<evidence type="ECO:0000255" key="1">
    <source>
        <dbReference type="HAMAP-Rule" id="MF_02110"/>
    </source>
</evidence>
<sequence>MEKLPKKRVSKTKSQKLIHSLTTQKNRAFLKKISANEMLLELEKGAFKKNEAYFISDEEDKNYVLVPDNVISLLAENARKAFEARLRAELERDIITQAPIDFEDVREVSLQLLENLRQKDGNLPNINTLNFVKQIKKEHPNLFFNFDNMFKQPPFNENNFENFDNSDEENF</sequence>
<name>Y609_HELPJ</name>